<protein>
    <recommendedName>
        <fullName>PsbP domain-containing protein 6, chloroplastic</fullName>
    </recommendedName>
    <alternativeName>
        <fullName>OEC23-like protein 1</fullName>
    </alternativeName>
</protein>
<proteinExistence type="evidence at protein level"/>
<accession>Q9LXX5</accession>
<accession>Q0WQH4</accession>
<gene>
    <name type="primary">PPD6</name>
    <name type="ordered locus">At3g56650</name>
    <name type="ORF">T5P19.300</name>
</gene>
<comment type="function">
    <text evidence="5">May be involved in the redox regulation of photosystem II.</text>
</comment>
<comment type="interaction">
    <interactant intactId="EBI-2895738">
        <id>Q9LXX5</id>
    </interactant>
    <interactant intactId="EBI-368542">
        <id>P0AA25</id>
        <label>trxA</label>
    </interactant>
    <organismsDiffer>true</organismsDiffer>
    <experiments>2</experiments>
</comment>
<comment type="subcellular location">
    <subcellularLocation>
        <location evidence="2 3 4">Plastid</location>
        <location evidence="2 3 4">Chloroplast thylakoid lumen</location>
    </subcellularLocation>
</comment>
<comment type="similarity">
    <text evidence="6">Belongs to the PsbP family.</text>
</comment>
<comment type="sequence caution" evidence="6">
    <conflict type="frameshift">
        <sequence resource="EMBL-CDS" id="BAF00625"/>
    </conflict>
</comment>
<reference key="1">
    <citation type="journal article" date="2000" name="Nature">
        <title>Sequence and analysis of chromosome 3 of the plant Arabidopsis thaliana.</title>
        <authorList>
            <person name="Salanoubat M."/>
            <person name="Lemcke K."/>
            <person name="Rieger M."/>
            <person name="Ansorge W."/>
            <person name="Unseld M."/>
            <person name="Fartmann B."/>
            <person name="Valle G."/>
            <person name="Bloecker H."/>
            <person name="Perez-Alonso M."/>
            <person name="Obermaier B."/>
            <person name="Delseny M."/>
            <person name="Boutry M."/>
            <person name="Grivell L.A."/>
            <person name="Mache R."/>
            <person name="Puigdomenech P."/>
            <person name="De Simone V."/>
            <person name="Choisne N."/>
            <person name="Artiguenave F."/>
            <person name="Robert C."/>
            <person name="Brottier P."/>
            <person name="Wincker P."/>
            <person name="Cattolico L."/>
            <person name="Weissenbach J."/>
            <person name="Saurin W."/>
            <person name="Quetier F."/>
            <person name="Schaefer M."/>
            <person name="Mueller-Auer S."/>
            <person name="Gabel C."/>
            <person name="Fuchs M."/>
            <person name="Benes V."/>
            <person name="Wurmbach E."/>
            <person name="Drzonek H."/>
            <person name="Erfle H."/>
            <person name="Jordan N."/>
            <person name="Bangert S."/>
            <person name="Wiedelmann R."/>
            <person name="Kranz H."/>
            <person name="Voss H."/>
            <person name="Holland R."/>
            <person name="Brandt P."/>
            <person name="Nyakatura G."/>
            <person name="Vezzi A."/>
            <person name="D'Angelo M."/>
            <person name="Pallavicini A."/>
            <person name="Toppo S."/>
            <person name="Simionati B."/>
            <person name="Conrad A."/>
            <person name="Hornischer K."/>
            <person name="Kauer G."/>
            <person name="Loehnert T.-H."/>
            <person name="Nordsiek G."/>
            <person name="Reichelt J."/>
            <person name="Scharfe M."/>
            <person name="Schoen O."/>
            <person name="Bargues M."/>
            <person name="Terol J."/>
            <person name="Climent J."/>
            <person name="Navarro P."/>
            <person name="Collado C."/>
            <person name="Perez-Perez A."/>
            <person name="Ottenwaelder B."/>
            <person name="Duchemin D."/>
            <person name="Cooke R."/>
            <person name="Laudie M."/>
            <person name="Berger-Llauro C."/>
            <person name="Purnelle B."/>
            <person name="Masuy D."/>
            <person name="de Haan M."/>
            <person name="Maarse A.C."/>
            <person name="Alcaraz J.-P."/>
            <person name="Cottet A."/>
            <person name="Casacuberta E."/>
            <person name="Monfort A."/>
            <person name="Argiriou A."/>
            <person name="Flores M."/>
            <person name="Liguori R."/>
            <person name="Vitale D."/>
            <person name="Mannhaupt G."/>
            <person name="Haase D."/>
            <person name="Schoof H."/>
            <person name="Rudd S."/>
            <person name="Zaccaria P."/>
            <person name="Mewes H.-W."/>
            <person name="Mayer K.F.X."/>
            <person name="Kaul S."/>
            <person name="Town C.D."/>
            <person name="Koo H.L."/>
            <person name="Tallon L.J."/>
            <person name="Jenkins J."/>
            <person name="Rooney T."/>
            <person name="Rizzo M."/>
            <person name="Walts A."/>
            <person name="Utterback T."/>
            <person name="Fujii C.Y."/>
            <person name="Shea T.P."/>
            <person name="Creasy T.H."/>
            <person name="Haas B."/>
            <person name="Maiti R."/>
            <person name="Wu D."/>
            <person name="Peterson J."/>
            <person name="Van Aken S."/>
            <person name="Pai G."/>
            <person name="Militscher J."/>
            <person name="Sellers P."/>
            <person name="Gill J.E."/>
            <person name="Feldblyum T.V."/>
            <person name="Preuss D."/>
            <person name="Lin X."/>
            <person name="Nierman W.C."/>
            <person name="Salzberg S.L."/>
            <person name="White O."/>
            <person name="Venter J.C."/>
            <person name="Fraser C.M."/>
            <person name="Kaneko T."/>
            <person name="Nakamura Y."/>
            <person name="Sato S."/>
            <person name="Kato T."/>
            <person name="Asamizu E."/>
            <person name="Sasamoto S."/>
            <person name="Kimura T."/>
            <person name="Idesawa K."/>
            <person name="Kawashima K."/>
            <person name="Kishida Y."/>
            <person name="Kiyokawa C."/>
            <person name="Kohara M."/>
            <person name="Matsumoto M."/>
            <person name="Matsuno A."/>
            <person name="Muraki A."/>
            <person name="Nakayama S."/>
            <person name="Nakazaki N."/>
            <person name="Shinpo S."/>
            <person name="Takeuchi C."/>
            <person name="Wada T."/>
            <person name="Watanabe A."/>
            <person name="Yamada M."/>
            <person name="Yasuda M."/>
            <person name="Tabata S."/>
        </authorList>
    </citation>
    <scope>NUCLEOTIDE SEQUENCE [LARGE SCALE GENOMIC DNA]</scope>
    <source>
        <strain>cv. Columbia</strain>
    </source>
</reference>
<reference key="2">
    <citation type="journal article" date="2017" name="Plant J.">
        <title>Araport11: a complete reannotation of the Arabidopsis thaliana reference genome.</title>
        <authorList>
            <person name="Cheng C.Y."/>
            <person name="Krishnakumar V."/>
            <person name="Chan A.P."/>
            <person name="Thibaud-Nissen F."/>
            <person name="Schobel S."/>
            <person name="Town C.D."/>
        </authorList>
    </citation>
    <scope>GENOME REANNOTATION</scope>
    <source>
        <strain>cv. Columbia</strain>
    </source>
</reference>
<reference key="3">
    <citation type="submission" date="2006-07" db="EMBL/GenBank/DDBJ databases">
        <title>Large-scale analysis of RIKEN Arabidopsis full-length (RAFL) cDNAs.</title>
        <authorList>
            <person name="Totoki Y."/>
            <person name="Seki M."/>
            <person name="Ishida J."/>
            <person name="Nakajima M."/>
            <person name="Enju A."/>
            <person name="Kamiya A."/>
            <person name="Narusaka M."/>
            <person name="Shin-i T."/>
            <person name="Nakagawa M."/>
            <person name="Sakamoto N."/>
            <person name="Oishi K."/>
            <person name="Kohara Y."/>
            <person name="Kobayashi M."/>
            <person name="Toyoda A."/>
            <person name="Sakaki Y."/>
            <person name="Sakurai T."/>
            <person name="Iida K."/>
            <person name="Akiyama K."/>
            <person name="Satou M."/>
            <person name="Toyoda T."/>
            <person name="Konagaya A."/>
            <person name="Carninci P."/>
            <person name="Kawai J."/>
            <person name="Hayashizaki Y."/>
            <person name="Shinozaki K."/>
        </authorList>
    </citation>
    <scope>NUCLEOTIDE SEQUENCE [LARGE SCALE MRNA]</scope>
    <source>
        <strain>cv. Columbia</strain>
    </source>
</reference>
<reference key="4">
    <citation type="journal article" date="2002" name="J. Biol. Chem.">
        <title>Proteome map of the chloroplast lumen of Arabidopsis thaliana.</title>
        <authorList>
            <person name="Schubert M."/>
            <person name="Petersson U.A."/>
            <person name="Haas B.J."/>
            <person name="Funk C."/>
            <person name="Schroeder W.P."/>
            <person name="Kieselbach T."/>
        </authorList>
    </citation>
    <scope>PROTEIN SEQUENCE OF 68-87</scope>
    <scope>SUBCELLULAR LOCATION</scope>
</reference>
<reference key="5">
    <citation type="journal article" date="2002" name="Plant Cell">
        <title>Central functions of the lumenal and peripheral thylakoid proteome of Arabidopsis determined by experimentation and genome-wide prediction.</title>
        <authorList>
            <person name="Peltier J.-B."/>
            <person name="Emanuelsson O."/>
            <person name="Kalume D.E."/>
            <person name="Ytterberg J."/>
            <person name="Friso G."/>
            <person name="Rudella A."/>
            <person name="Liberles D.A."/>
            <person name="Soederberg L."/>
            <person name="Roepstorff P."/>
            <person name="von Heijne G."/>
            <person name="van Wijk K.J."/>
        </authorList>
    </citation>
    <scope>PROTEIN SEQUENCE OF 68-72</scope>
    <scope>SUBCELLULAR LOCATION</scope>
    <source>
        <strain>cv. Columbia</strain>
        <tissue>Leaf</tissue>
    </source>
</reference>
<reference key="6">
    <citation type="journal article" date="2007" name="Plant Physiol.">
        <title>Distinct functions for the two PsbP-like proteins PPL1 and PPL2 in the chloroplast thylakoid lumen of Arabidopsis.</title>
        <authorList>
            <person name="Ishihara S."/>
            <person name="Takabayashi A."/>
            <person name="Ido K."/>
            <person name="Endo T."/>
            <person name="Ifuku K."/>
            <person name="Sato F."/>
        </authorList>
    </citation>
    <scope>GENE FAMILY</scope>
    <scope>NOMENCLATURE</scope>
</reference>
<reference key="7">
    <citation type="journal article" date="2008" name="PLoS ONE">
        <title>Sorting signals, N-terminal modifications and abundance of the chloroplast proteome.</title>
        <authorList>
            <person name="Zybailov B."/>
            <person name="Rutschow H."/>
            <person name="Friso G."/>
            <person name="Rudella A."/>
            <person name="Emanuelsson O."/>
            <person name="Sun Q."/>
            <person name="van Wijk K.J."/>
        </authorList>
    </citation>
    <scope>IDENTIFICATION BY MASS SPECTROMETRY</scope>
    <scope>SUBCELLULAR LOCATION [LARGE SCALE ANALYSIS]</scope>
</reference>
<reference key="8">
    <citation type="journal article" date="2010" name="Proteomics">
        <title>Thioredoxin targets of the plant chloroplast lumen and their implications for plastid function.</title>
        <authorList>
            <person name="Hall M."/>
            <person name="Mata-Cabana A."/>
            <person name="Akerlund H.E."/>
            <person name="Florencio F.J."/>
            <person name="Schroeder W.P."/>
            <person name="Lindahl M."/>
            <person name="Kieselbach T."/>
        </authorList>
    </citation>
    <scope>FUNCTION</scope>
    <scope>DISULFIDE BOND</scope>
    <scope>IDENTIFICATION BY MASS SPECTROMETRY</scope>
</reference>
<reference key="9">
    <citation type="journal article" date="2012" name="Acta Crystallogr. F">
        <title>Purification, crystallization and preliminary X-ray analysis of PPD6, a PsbP-domain protein from Arabidopsis thaliana.</title>
        <authorList>
            <person name="Hall M."/>
            <person name="Kieselbach T."/>
            <person name="Sauer U.H."/>
            <person name="Schroeder W.P."/>
        </authorList>
    </citation>
    <scope>PRELIMINARY CRYSTALLIZATION</scope>
</reference>
<sequence length="262" mass="28630">MATASLVPTSKIFSVSPKSSASIKARSRVVVASSQQQQQPRRRELLLKSAVAIPAILQLKEAPISAAREVEVGSYLPLSPSDPSFVLFKAKPSDTPALRAGNVQPYQFVLPPNWKQLRIANILSGNYCQPKCAEPWIEVKFENEKQGKVQVVASPLIRLTNKPNATIEDLGEPEKVIASLGPFVTGNSYDSDELLKTSIEKIGDQTYYKYVLETPFALTGSHNLAKATAKGSTVVLFVVSATEKQWQSSQKTLEAILDSFQL</sequence>
<keyword id="KW-0150">Chloroplast</keyword>
<keyword id="KW-0903">Direct protein sequencing</keyword>
<keyword id="KW-1015">Disulfide bond</keyword>
<keyword id="KW-0934">Plastid</keyword>
<keyword id="KW-1185">Reference proteome</keyword>
<keyword id="KW-0793">Thylakoid</keyword>
<keyword id="KW-0809">Transit peptide</keyword>
<organism>
    <name type="scientific">Arabidopsis thaliana</name>
    <name type="common">Mouse-ear cress</name>
    <dbReference type="NCBI Taxonomy" id="3702"/>
    <lineage>
        <taxon>Eukaryota</taxon>
        <taxon>Viridiplantae</taxon>
        <taxon>Streptophyta</taxon>
        <taxon>Embryophyta</taxon>
        <taxon>Tracheophyta</taxon>
        <taxon>Spermatophyta</taxon>
        <taxon>Magnoliopsida</taxon>
        <taxon>eudicotyledons</taxon>
        <taxon>Gunneridae</taxon>
        <taxon>Pentapetalae</taxon>
        <taxon>rosids</taxon>
        <taxon>malvids</taxon>
        <taxon>Brassicales</taxon>
        <taxon>Brassicaceae</taxon>
        <taxon>Camelineae</taxon>
        <taxon>Arabidopsis</taxon>
    </lineage>
</organism>
<dbReference type="EMBL" id="AL163972">
    <property type="protein sequence ID" value="CAB88068.1"/>
    <property type="molecule type" value="Genomic_DNA"/>
</dbReference>
<dbReference type="EMBL" id="CP002686">
    <property type="protein sequence ID" value="AEE79548.1"/>
    <property type="molecule type" value="Genomic_DNA"/>
</dbReference>
<dbReference type="EMBL" id="AK228723">
    <property type="protein sequence ID" value="BAF00625.1"/>
    <property type="status" value="ALT_FRAME"/>
    <property type="molecule type" value="mRNA"/>
</dbReference>
<dbReference type="PIR" id="T49066">
    <property type="entry name" value="T49066"/>
</dbReference>
<dbReference type="RefSeq" id="NP_191224.1">
    <property type="nucleotide sequence ID" value="NM_115524.3"/>
</dbReference>
<dbReference type="FunCoup" id="Q9LXX5">
    <property type="interactions" value="1391"/>
</dbReference>
<dbReference type="IntAct" id="Q9LXX5">
    <property type="interactions" value="2"/>
</dbReference>
<dbReference type="STRING" id="3702.Q9LXX5"/>
<dbReference type="PaxDb" id="3702-AT3G56650.1"/>
<dbReference type="ProteomicsDB" id="249340"/>
<dbReference type="EnsemblPlants" id="AT3G56650.1">
    <property type="protein sequence ID" value="AT3G56650.1"/>
    <property type="gene ID" value="AT3G56650"/>
</dbReference>
<dbReference type="GeneID" id="824832"/>
<dbReference type="Gramene" id="AT3G56650.1">
    <property type="protein sequence ID" value="AT3G56650.1"/>
    <property type="gene ID" value="AT3G56650"/>
</dbReference>
<dbReference type="KEGG" id="ath:AT3G56650"/>
<dbReference type="Araport" id="AT3G56650"/>
<dbReference type="TAIR" id="AT3G56650">
    <property type="gene designation" value="PPD6"/>
</dbReference>
<dbReference type="eggNOG" id="ENOG502QT2I">
    <property type="taxonomic scope" value="Eukaryota"/>
</dbReference>
<dbReference type="HOGENOM" id="CLU_061284_0_0_1"/>
<dbReference type="InParanoid" id="Q9LXX5"/>
<dbReference type="OMA" id="ANDKQWA"/>
<dbReference type="OrthoDB" id="512438at2759"/>
<dbReference type="PhylomeDB" id="Q9LXX5"/>
<dbReference type="BioCyc" id="MetaCyc:AT3G56650-MONOMER"/>
<dbReference type="PRO" id="PR:Q9LXX5"/>
<dbReference type="Proteomes" id="UP000006548">
    <property type="component" value="Chromosome 3"/>
</dbReference>
<dbReference type="ExpressionAtlas" id="Q9LXX5">
    <property type="expression patterns" value="baseline and differential"/>
</dbReference>
<dbReference type="GO" id="GO:0009507">
    <property type="term" value="C:chloroplast"/>
    <property type="evidence" value="ECO:0007005"/>
    <property type="project" value="TAIR"/>
</dbReference>
<dbReference type="GO" id="GO:0009570">
    <property type="term" value="C:chloroplast stroma"/>
    <property type="evidence" value="ECO:0007005"/>
    <property type="project" value="TAIR"/>
</dbReference>
<dbReference type="GO" id="GO:0009534">
    <property type="term" value="C:chloroplast thylakoid"/>
    <property type="evidence" value="ECO:0007005"/>
    <property type="project" value="TAIR"/>
</dbReference>
<dbReference type="GO" id="GO:0009543">
    <property type="term" value="C:chloroplast thylakoid lumen"/>
    <property type="evidence" value="ECO:0007669"/>
    <property type="project" value="UniProtKB-SubCell"/>
</dbReference>
<dbReference type="GO" id="GO:0005829">
    <property type="term" value="C:cytosol"/>
    <property type="evidence" value="ECO:0007005"/>
    <property type="project" value="TAIR"/>
</dbReference>
<dbReference type="GO" id="GO:0019898">
    <property type="term" value="C:extrinsic component of membrane"/>
    <property type="evidence" value="ECO:0007669"/>
    <property type="project" value="InterPro"/>
</dbReference>
<dbReference type="GO" id="GO:0009654">
    <property type="term" value="C:photosystem II oxygen evolving complex"/>
    <property type="evidence" value="ECO:0007669"/>
    <property type="project" value="InterPro"/>
</dbReference>
<dbReference type="GO" id="GO:0009579">
    <property type="term" value="C:thylakoid"/>
    <property type="evidence" value="ECO:0007005"/>
    <property type="project" value="TAIR"/>
</dbReference>
<dbReference type="GO" id="GO:0031977">
    <property type="term" value="C:thylakoid lumen"/>
    <property type="evidence" value="ECO:0007005"/>
    <property type="project" value="TAIR"/>
</dbReference>
<dbReference type="GO" id="GO:0005509">
    <property type="term" value="F:calcium ion binding"/>
    <property type="evidence" value="ECO:0007669"/>
    <property type="project" value="InterPro"/>
</dbReference>
<dbReference type="GO" id="GO:0015979">
    <property type="term" value="P:photosynthesis"/>
    <property type="evidence" value="ECO:0007669"/>
    <property type="project" value="InterPro"/>
</dbReference>
<dbReference type="Gene3D" id="3.40.1000.10">
    <property type="entry name" value="Mog1/PsbP, alpha/beta/alpha sandwich"/>
    <property type="match status" value="1"/>
</dbReference>
<dbReference type="InterPro" id="IPR016123">
    <property type="entry name" value="Mog1/PsbP_a/b/a-sand"/>
</dbReference>
<dbReference type="InterPro" id="IPR002683">
    <property type="entry name" value="PsbP_C"/>
</dbReference>
<dbReference type="PANTHER" id="PTHR31407">
    <property type="match status" value="1"/>
</dbReference>
<dbReference type="PANTHER" id="PTHR31407:SF18">
    <property type="entry name" value="PSBP DOMAIN-CONTAINING PROTEIN 6, CHLOROPLASTIC"/>
    <property type="match status" value="1"/>
</dbReference>
<dbReference type="Pfam" id="PF01789">
    <property type="entry name" value="PsbP"/>
    <property type="match status" value="1"/>
</dbReference>
<dbReference type="SUPFAM" id="SSF55724">
    <property type="entry name" value="Mog1p/PsbP-like"/>
    <property type="match status" value="1"/>
</dbReference>
<evidence type="ECO:0000255" key="1"/>
<evidence type="ECO:0000269" key="2">
    <source>
    </source>
</evidence>
<evidence type="ECO:0000269" key="3">
    <source>
    </source>
</evidence>
<evidence type="ECO:0000269" key="4">
    <source>
    </source>
</evidence>
<evidence type="ECO:0000269" key="5">
    <source>
    </source>
</evidence>
<evidence type="ECO:0000305" key="6"/>
<feature type="transit peptide" description="Chloroplast" evidence="1">
    <location>
        <begin position="1"/>
        <end status="unknown"/>
    </location>
</feature>
<feature type="transit peptide" description="Thylakoid" evidence="2 3">
    <location>
        <begin status="unknown"/>
        <end position="67"/>
    </location>
</feature>
<feature type="chain" id="PRO_0000341583" description="PsbP domain-containing protein 6, chloroplastic">
    <location>
        <begin position="68"/>
        <end position="262"/>
    </location>
</feature>
<feature type="disulfide bond" evidence="5">
    <location>
        <begin position="128"/>
        <end position="132"/>
    </location>
</feature>
<name>PPD6_ARATH</name>